<feature type="chain" id="PRO_0000151475" description="Phosphoribosylamine--glycine ligase">
    <location>
        <begin position="1"/>
        <end position="437"/>
    </location>
</feature>
<feature type="domain" description="ATP-grasp" evidence="2">
    <location>
        <begin position="110"/>
        <end position="322"/>
    </location>
</feature>
<feature type="binding site" evidence="2">
    <location>
        <begin position="142"/>
        <end position="203"/>
    </location>
    <ligand>
        <name>ATP</name>
        <dbReference type="ChEBI" id="CHEBI:30616"/>
    </ligand>
</feature>
<feature type="binding site" evidence="2">
    <location>
        <position position="292"/>
    </location>
    <ligand>
        <name>Mg(2+)</name>
        <dbReference type="ChEBI" id="CHEBI:18420"/>
    </ligand>
</feature>
<feature type="binding site" evidence="2">
    <location>
        <position position="294"/>
    </location>
    <ligand>
        <name>Mg(2+)</name>
        <dbReference type="ChEBI" id="CHEBI:18420"/>
    </ligand>
</feature>
<name>PUR2_RHOBA</name>
<protein>
    <recommendedName>
        <fullName evidence="2">Phosphoribosylamine--glycine ligase</fullName>
        <ecNumber evidence="2">6.3.4.13</ecNumber>
    </recommendedName>
    <alternativeName>
        <fullName evidence="2">GARS</fullName>
    </alternativeName>
    <alternativeName>
        <fullName evidence="2">Glycinamide ribonucleotide synthetase</fullName>
    </alternativeName>
    <alternativeName>
        <fullName evidence="2">Phosphoribosylglycinamide synthetase</fullName>
    </alternativeName>
</protein>
<keyword id="KW-0067">ATP-binding</keyword>
<keyword id="KW-0436">Ligase</keyword>
<keyword id="KW-0460">Magnesium</keyword>
<keyword id="KW-0464">Manganese</keyword>
<keyword id="KW-0479">Metal-binding</keyword>
<keyword id="KW-0547">Nucleotide-binding</keyword>
<keyword id="KW-0658">Purine biosynthesis</keyword>
<keyword id="KW-1185">Reference proteome</keyword>
<organism>
    <name type="scientific">Rhodopirellula baltica (strain DSM 10527 / NCIMB 13988 / SH1)</name>
    <dbReference type="NCBI Taxonomy" id="243090"/>
    <lineage>
        <taxon>Bacteria</taxon>
        <taxon>Pseudomonadati</taxon>
        <taxon>Planctomycetota</taxon>
        <taxon>Planctomycetia</taxon>
        <taxon>Pirellulales</taxon>
        <taxon>Pirellulaceae</taxon>
        <taxon>Rhodopirellula</taxon>
    </lineage>
</organism>
<dbReference type="EC" id="6.3.4.13" evidence="2"/>
<dbReference type="EMBL" id="BX294144">
    <property type="protein sequence ID" value="CAD74908.1"/>
    <property type="status" value="ALT_INIT"/>
    <property type="molecule type" value="Genomic_DNA"/>
</dbReference>
<dbReference type="RefSeq" id="NP_867362.1">
    <property type="nucleotide sequence ID" value="NC_005027.1"/>
</dbReference>
<dbReference type="RefSeq" id="WP_007334006.1">
    <property type="nucleotide sequence ID" value="NC_005027.1"/>
</dbReference>
<dbReference type="SMR" id="Q7UPZ8"/>
<dbReference type="FunCoup" id="Q7UPZ8">
    <property type="interactions" value="364"/>
</dbReference>
<dbReference type="STRING" id="243090.RB6616"/>
<dbReference type="EnsemblBacteria" id="CAD74908">
    <property type="protein sequence ID" value="CAD74908"/>
    <property type="gene ID" value="RB6616"/>
</dbReference>
<dbReference type="KEGG" id="rba:RB6616"/>
<dbReference type="PATRIC" id="fig|243090.15.peg.3204"/>
<dbReference type="eggNOG" id="COG0151">
    <property type="taxonomic scope" value="Bacteria"/>
</dbReference>
<dbReference type="HOGENOM" id="CLU_027420_3_1_0"/>
<dbReference type="InParanoid" id="Q7UPZ8"/>
<dbReference type="OrthoDB" id="9807240at2"/>
<dbReference type="UniPathway" id="UPA00074">
    <property type="reaction ID" value="UER00125"/>
</dbReference>
<dbReference type="Proteomes" id="UP000001025">
    <property type="component" value="Chromosome"/>
</dbReference>
<dbReference type="GO" id="GO:0005524">
    <property type="term" value="F:ATP binding"/>
    <property type="evidence" value="ECO:0007669"/>
    <property type="project" value="UniProtKB-KW"/>
</dbReference>
<dbReference type="GO" id="GO:0046872">
    <property type="term" value="F:metal ion binding"/>
    <property type="evidence" value="ECO:0007669"/>
    <property type="project" value="UniProtKB-KW"/>
</dbReference>
<dbReference type="GO" id="GO:0004637">
    <property type="term" value="F:phosphoribosylamine-glycine ligase activity"/>
    <property type="evidence" value="ECO:0007669"/>
    <property type="project" value="UniProtKB-UniRule"/>
</dbReference>
<dbReference type="GO" id="GO:0006189">
    <property type="term" value="P:'de novo' IMP biosynthetic process"/>
    <property type="evidence" value="ECO:0007669"/>
    <property type="project" value="UniProtKB-UniRule"/>
</dbReference>
<dbReference type="GO" id="GO:0009113">
    <property type="term" value="P:purine nucleobase biosynthetic process"/>
    <property type="evidence" value="ECO:0007669"/>
    <property type="project" value="InterPro"/>
</dbReference>
<dbReference type="FunFam" id="3.40.50.20:FF:000006">
    <property type="entry name" value="Phosphoribosylamine--glycine ligase, chloroplastic"/>
    <property type="match status" value="1"/>
</dbReference>
<dbReference type="FunFam" id="3.30.470.20:FF:000018">
    <property type="entry name" value="Trifunctional purine biosynthetic protein adenosine-3"/>
    <property type="match status" value="1"/>
</dbReference>
<dbReference type="FunFam" id="3.90.600.10:FF:000001">
    <property type="entry name" value="Trifunctional purine biosynthetic protein adenosine-3"/>
    <property type="match status" value="1"/>
</dbReference>
<dbReference type="Gene3D" id="3.40.50.20">
    <property type="match status" value="1"/>
</dbReference>
<dbReference type="Gene3D" id="3.30.1490.20">
    <property type="entry name" value="ATP-grasp fold, A domain"/>
    <property type="match status" value="1"/>
</dbReference>
<dbReference type="Gene3D" id="3.30.470.20">
    <property type="entry name" value="ATP-grasp fold, B domain"/>
    <property type="match status" value="1"/>
</dbReference>
<dbReference type="Gene3D" id="3.90.600.10">
    <property type="entry name" value="Phosphoribosylglycinamide synthetase, C-terminal domain"/>
    <property type="match status" value="1"/>
</dbReference>
<dbReference type="HAMAP" id="MF_00138">
    <property type="entry name" value="GARS"/>
    <property type="match status" value="1"/>
</dbReference>
<dbReference type="InterPro" id="IPR011761">
    <property type="entry name" value="ATP-grasp"/>
</dbReference>
<dbReference type="InterPro" id="IPR013815">
    <property type="entry name" value="ATP_grasp_subdomain_1"/>
</dbReference>
<dbReference type="InterPro" id="IPR016185">
    <property type="entry name" value="PreATP-grasp_dom_sf"/>
</dbReference>
<dbReference type="InterPro" id="IPR020561">
    <property type="entry name" value="PRibGlycinamid_synth_ATP-grasp"/>
</dbReference>
<dbReference type="InterPro" id="IPR000115">
    <property type="entry name" value="PRibGlycinamide_synth"/>
</dbReference>
<dbReference type="InterPro" id="IPR020560">
    <property type="entry name" value="PRibGlycinamide_synth_C-dom"/>
</dbReference>
<dbReference type="InterPro" id="IPR037123">
    <property type="entry name" value="PRibGlycinamide_synth_C_sf"/>
</dbReference>
<dbReference type="InterPro" id="IPR020559">
    <property type="entry name" value="PRibGlycinamide_synth_CS"/>
</dbReference>
<dbReference type="InterPro" id="IPR020562">
    <property type="entry name" value="PRibGlycinamide_synth_N"/>
</dbReference>
<dbReference type="InterPro" id="IPR011054">
    <property type="entry name" value="Rudment_hybrid_motif"/>
</dbReference>
<dbReference type="NCBIfam" id="TIGR00877">
    <property type="entry name" value="purD"/>
    <property type="match status" value="1"/>
</dbReference>
<dbReference type="PANTHER" id="PTHR43472">
    <property type="entry name" value="PHOSPHORIBOSYLAMINE--GLYCINE LIGASE"/>
    <property type="match status" value="1"/>
</dbReference>
<dbReference type="PANTHER" id="PTHR43472:SF1">
    <property type="entry name" value="PHOSPHORIBOSYLAMINE--GLYCINE LIGASE, CHLOROPLASTIC"/>
    <property type="match status" value="1"/>
</dbReference>
<dbReference type="Pfam" id="PF01071">
    <property type="entry name" value="GARS_A"/>
    <property type="match status" value="1"/>
</dbReference>
<dbReference type="Pfam" id="PF02843">
    <property type="entry name" value="GARS_C"/>
    <property type="match status" value="1"/>
</dbReference>
<dbReference type="Pfam" id="PF02844">
    <property type="entry name" value="GARS_N"/>
    <property type="match status" value="1"/>
</dbReference>
<dbReference type="SMART" id="SM01209">
    <property type="entry name" value="GARS_A"/>
    <property type="match status" value="1"/>
</dbReference>
<dbReference type="SMART" id="SM01210">
    <property type="entry name" value="GARS_C"/>
    <property type="match status" value="1"/>
</dbReference>
<dbReference type="SUPFAM" id="SSF56059">
    <property type="entry name" value="Glutathione synthetase ATP-binding domain-like"/>
    <property type="match status" value="1"/>
</dbReference>
<dbReference type="SUPFAM" id="SSF52440">
    <property type="entry name" value="PreATP-grasp domain"/>
    <property type="match status" value="1"/>
</dbReference>
<dbReference type="SUPFAM" id="SSF51246">
    <property type="entry name" value="Rudiment single hybrid motif"/>
    <property type="match status" value="1"/>
</dbReference>
<dbReference type="PROSITE" id="PS50975">
    <property type="entry name" value="ATP_GRASP"/>
    <property type="match status" value="1"/>
</dbReference>
<dbReference type="PROSITE" id="PS00184">
    <property type="entry name" value="GARS"/>
    <property type="match status" value="1"/>
</dbReference>
<comment type="catalytic activity">
    <reaction evidence="2">
        <text>5-phospho-beta-D-ribosylamine + glycine + ATP = N(1)-(5-phospho-beta-D-ribosyl)glycinamide + ADP + phosphate + H(+)</text>
        <dbReference type="Rhea" id="RHEA:17453"/>
        <dbReference type="ChEBI" id="CHEBI:15378"/>
        <dbReference type="ChEBI" id="CHEBI:30616"/>
        <dbReference type="ChEBI" id="CHEBI:43474"/>
        <dbReference type="ChEBI" id="CHEBI:57305"/>
        <dbReference type="ChEBI" id="CHEBI:58681"/>
        <dbReference type="ChEBI" id="CHEBI:143788"/>
        <dbReference type="ChEBI" id="CHEBI:456216"/>
        <dbReference type="EC" id="6.3.4.13"/>
    </reaction>
</comment>
<comment type="cofactor">
    <cofactor evidence="1">
        <name>Mg(2+)</name>
        <dbReference type="ChEBI" id="CHEBI:18420"/>
    </cofactor>
    <cofactor evidence="1">
        <name>Mn(2+)</name>
        <dbReference type="ChEBI" id="CHEBI:29035"/>
    </cofactor>
    <text evidence="1">Binds 1 Mg(2+) or Mn(2+) ion per subunit.</text>
</comment>
<comment type="pathway">
    <text evidence="2">Purine metabolism; IMP biosynthesis via de novo pathway; N(1)-(5-phospho-D-ribosyl)glycinamide from 5-phospho-alpha-D-ribose 1-diphosphate: step 2/2.</text>
</comment>
<comment type="similarity">
    <text evidence="2">Belongs to the GARS family.</text>
</comment>
<comment type="sequence caution" evidence="3">
    <conflict type="erroneous initiation">
        <sequence resource="EMBL-CDS" id="CAD74908"/>
    </conflict>
</comment>
<accession>Q7UPZ8</accession>
<evidence type="ECO:0000250" key="1"/>
<evidence type="ECO:0000255" key="2">
    <source>
        <dbReference type="HAMAP-Rule" id="MF_00138"/>
    </source>
</evidence>
<evidence type="ECO:0000305" key="3"/>
<gene>
    <name evidence="2" type="primary">purD</name>
    <name type="ordered locus">RB6616</name>
</gene>
<sequence length="437" mass="46501">MSKYNVLIVGSGGREHALAWKVKQSQHVQNVFVAPGNAGTGMDATNVDLDPADHDAVIQFAKENNVGLVIVGPEAPLVAGLVDALTDAGLRAFGPSKAASELEGSKVFCKNLLRSADIPTADYRTFRSADDASRYIKDRFSEPTDPVNVVVKADGLAAGKGVVVCDTRSEALEAIDRIAARKEFGAAGKELIIEERLTGPEVSVLAITDGETIVTLPPAQDHKPANDGDTGPNTGGMGAYCPAPVLDEETLAKVESSILVPVVHAMKRSRRPFKGVLYAGLMLTPAGPKVLEFNVRFGDPECQPLLMRLKTDLVEVMQAVVDGKLEETGPLEFDPRPAICVVMASEGYPADYEKGHAITGIESADKMENVKVFHAGTQRVDGEVVNTGGRVLGVTAMGDSISAAKLQAYKAVREIRWQGAWCRKDISDKALVTADKA</sequence>
<proteinExistence type="inferred from homology"/>
<reference key="1">
    <citation type="journal article" date="2003" name="Proc. Natl. Acad. Sci. U.S.A.">
        <title>Complete genome sequence of the marine planctomycete Pirellula sp. strain 1.</title>
        <authorList>
            <person name="Gloeckner F.O."/>
            <person name="Kube M."/>
            <person name="Bauer M."/>
            <person name="Teeling H."/>
            <person name="Lombardot T."/>
            <person name="Ludwig W."/>
            <person name="Gade D."/>
            <person name="Beck A."/>
            <person name="Borzym K."/>
            <person name="Heitmann K."/>
            <person name="Rabus R."/>
            <person name="Schlesner H."/>
            <person name="Amann R."/>
            <person name="Reinhardt R."/>
        </authorList>
    </citation>
    <scope>NUCLEOTIDE SEQUENCE [LARGE SCALE GENOMIC DNA]</scope>
    <source>
        <strain>DSM 10527 / NCIMB 13988 / SH1</strain>
    </source>
</reference>